<dbReference type="EMBL" id="CP000377">
    <property type="protein sequence ID" value="ABF62962.1"/>
    <property type="molecule type" value="Genomic_DNA"/>
</dbReference>
<dbReference type="RefSeq" id="WP_005621043.1">
    <property type="nucleotide sequence ID" value="NC_008044.1"/>
</dbReference>
<dbReference type="SMR" id="Q1GK54"/>
<dbReference type="STRING" id="292414.TM1040_0229"/>
<dbReference type="GeneID" id="28248338"/>
<dbReference type="KEGG" id="sit:TM1040_0229"/>
<dbReference type="eggNOG" id="COG0080">
    <property type="taxonomic scope" value="Bacteria"/>
</dbReference>
<dbReference type="HOGENOM" id="CLU_074237_2_0_5"/>
<dbReference type="OrthoDB" id="9802408at2"/>
<dbReference type="Proteomes" id="UP000000636">
    <property type="component" value="Chromosome"/>
</dbReference>
<dbReference type="GO" id="GO:0022625">
    <property type="term" value="C:cytosolic large ribosomal subunit"/>
    <property type="evidence" value="ECO:0007669"/>
    <property type="project" value="TreeGrafter"/>
</dbReference>
<dbReference type="GO" id="GO:0070180">
    <property type="term" value="F:large ribosomal subunit rRNA binding"/>
    <property type="evidence" value="ECO:0007669"/>
    <property type="project" value="UniProtKB-UniRule"/>
</dbReference>
<dbReference type="GO" id="GO:0003735">
    <property type="term" value="F:structural constituent of ribosome"/>
    <property type="evidence" value="ECO:0007669"/>
    <property type="project" value="InterPro"/>
</dbReference>
<dbReference type="GO" id="GO:0006412">
    <property type="term" value="P:translation"/>
    <property type="evidence" value="ECO:0007669"/>
    <property type="project" value="UniProtKB-UniRule"/>
</dbReference>
<dbReference type="CDD" id="cd00349">
    <property type="entry name" value="Ribosomal_L11"/>
    <property type="match status" value="1"/>
</dbReference>
<dbReference type="FunFam" id="1.10.10.250:FF:000001">
    <property type="entry name" value="50S ribosomal protein L11"/>
    <property type="match status" value="1"/>
</dbReference>
<dbReference type="FunFam" id="3.30.1550.10:FF:000005">
    <property type="entry name" value="50S ribosomal protein L11"/>
    <property type="match status" value="1"/>
</dbReference>
<dbReference type="Gene3D" id="1.10.10.250">
    <property type="entry name" value="Ribosomal protein L11, C-terminal domain"/>
    <property type="match status" value="1"/>
</dbReference>
<dbReference type="Gene3D" id="3.30.1550.10">
    <property type="entry name" value="Ribosomal protein L11/L12, N-terminal domain"/>
    <property type="match status" value="1"/>
</dbReference>
<dbReference type="HAMAP" id="MF_00736">
    <property type="entry name" value="Ribosomal_uL11"/>
    <property type="match status" value="1"/>
</dbReference>
<dbReference type="InterPro" id="IPR000911">
    <property type="entry name" value="Ribosomal_uL11"/>
</dbReference>
<dbReference type="InterPro" id="IPR006519">
    <property type="entry name" value="Ribosomal_uL11_bac-typ"/>
</dbReference>
<dbReference type="InterPro" id="IPR020783">
    <property type="entry name" value="Ribosomal_uL11_C"/>
</dbReference>
<dbReference type="InterPro" id="IPR036769">
    <property type="entry name" value="Ribosomal_uL11_C_sf"/>
</dbReference>
<dbReference type="InterPro" id="IPR020784">
    <property type="entry name" value="Ribosomal_uL11_N"/>
</dbReference>
<dbReference type="InterPro" id="IPR036796">
    <property type="entry name" value="Ribosomal_uL11_N_sf"/>
</dbReference>
<dbReference type="NCBIfam" id="TIGR01632">
    <property type="entry name" value="L11_bact"/>
    <property type="match status" value="1"/>
</dbReference>
<dbReference type="PANTHER" id="PTHR11661">
    <property type="entry name" value="60S RIBOSOMAL PROTEIN L12"/>
    <property type="match status" value="1"/>
</dbReference>
<dbReference type="PANTHER" id="PTHR11661:SF1">
    <property type="entry name" value="LARGE RIBOSOMAL SUBUNIT PROTEIN UL11M"/>
    <property type="match status" value="1"/>
</dbReference>
<dbReference type="Pfam" id="PF00298">
    <property type="entry name" value="Ribosomal_L11"/>
    <property type="match status" value="1"/>
</dbReference>
<dbReference type="Pfam" id="PF03946">
    <property type="entry name" value="Ribosomal_L11_N"/>
    <property type="match status" value="1"/>
</dbReference>
<dbReference type="SMART" id="SM00649">
    <property type="entry name" value="RL11"/>
    <property type="match status" value="1"/>
</dbReference>
<dbReference type="SUPFAM" id="SSF54747">
    <property type="entry name" value="Ribosomal L11/L12e N-terminal domain"/>
    <property type="match status" value="1"/>
</dbReference>
<dbReference type="SUPFAM" id="SSF46906">
    <property type="entry name" value="Ribosomal protein L11, C-terminal domain"/>
    <property type="match status" value="1"/>
</dbReference>
<keyword id="KW-0488">Methylation</keyword>
<keyword id="KW-1185">Reference proteome</keyword>
<keyword id="KW-0687">Ribonucleoprotein</keyword>
<keyword id="KW-0689">Ribosomal protein</keyword>
<keyword id="KW-0694">RNA-binding</keyword>
<keyword id="KW-0699">rRNA-binding</keyword>
<sequence length="141" mass="14947">MAKKLVGSMKLQVPAGQANPSPPVGPALGQRGINIMEFCKAFNAKTADMEPGAPCPTVITYYQDKSFTMDIKTPPASYYLKKAAKIKSGANNPSRETAGTVTAAQVKEIAEAKMKDLNANDIEAAMQIILGSARSMGIEVK</sequence>
<comment type="function">
    <text evidence="1">Forms part of the ribosomal stalk which helps the ribosome interact with GTP-bound translation factors.</text>
</comment>
<comment type="subunit">
    <text evidence="1">Part of the ribosomal stalk of the 50S ribosomal subunit. Interacts with L10 and the large rRNA to form the base of the stalk. L10 forms an elongated spine to which L12 dimers bind in a sequential fashion forming a multimeric L10(L12)X complex.</text>
</comment>
<comment type="PTM">
    <text evidence="1">One or more lysine residues are methylated.</text>
</comment>
<comment type="similarity">
    <text evidence="1">Belongs to the universal ribosomal protein uL11 family.</text>
</comment>
<name>RL11_RUEST</name>
<accession>Q1GK54</accession>
<organism>
    <name type="scientific">Ruegeria sp. (strain TM1040)</name>
    <name type="common">Silicibacter sp.</name>
    <dbReference type="NCBI Taxonomy" id="292414"/>
    <lineage>
        <taxon>Bacteria</taxon>
        <taxon>Pseudomonadati</taxon>
        <taxon>Pseudomonadota</taxon>
        <taxon>Alphaproteobacteria</taxon>
        <taxon>Rhodobacterales</taxon>
        <taxon>Roseobacteraceae</taxon>
        <taxon>Ruegeria</taxon>
    </lineage>
</organism>
<evidence type="ECO:0000255" key="1">
    <source>
        <dbReference type="HAMAP-Rule" id="MF_00736"/>
    </source>
</evidence>
<evidence type="ECO:0000305" key="2"/>
<protein>
    <recommendedName>
        <fullName evidence="1">Large ribosomal subunit protein uL11</fullName>
    </recommendedName>
    <alternativeName>
        <fullName evidence="2">50S ribosomal protein L11</fullName>
    </alternativeName>
</protein>
<gene>
    <name evidence="1" type="primary">rplK</name>
    <name type="ordered locus">TM1040_0229</name>
</gene>
<feature type="chain" id="PRO_0000258215" description="Large ribosomal subunit protein uL11">
    <location>
        <begin position="1"/>
        <end position="141"/>
    </location>
</feature>
<proteinExistence type="inferred from homology"/>
<reference key="1">
    <citation type="submission" date="2006-05" db="EMBL/GenBank/DDBJ databases">
        <title>Complete sequence of chromosome of Silicibacter sp. TM1040.</title>
        <authorList>
            <consortium name="US DOE Joint Genome Institute"/>
            <person name="Copeland A."/>
            <person name="Lucas S."/>
            <person name="Lapidus A."/>
            <person name="Barry K."/>
            <person name="Detter J.C."/>
            <person name="Glavina del Rio T."/>
            <person name="Hammon N."/>
            <person name="Israni S."/>
            <person name="Dalin E."/>
            <person name="Tice H."/>
            <person name="Pitluck S."/>
            <person name="Brettin T."/>
            <person name="Bruce D."/>
            <person name="Han C."/>
            <person name="Tapia R."/>
            <person name="Goodwin L."/>
            <person name="Thompson L.S."/>
            <person name="Gilna P."/>
            <person name="Schmutz J."/>
            <person name="Larimer F."/>
            <person name="Land M."/>
            <person name="Hauser L."/>
            <person name="Kyrpides N."/>
            <person name="Kim E."/>
            <person name="Belas R."/>
            <person name="Moran M.A."/>
            <person name="Buchan A."/>
            <person name="Gonzalez J.M."/>
            <person name="Schell M.A."/>
            <person name="Sun F."/>
            <person name="Richardson P."/>
        </authorList>
    </citation>
    <scope>NUCLEOTIDE SEQUENCE [LARGE SCALE GENOMIC DNA]</scope>
    <source>
        <strain>TM1040</strain>
    </source>
</reference>